<dbReference type="EMBL" id="M73774">
    <property type="protein sequence ID" value="ABF60580.1"/>
    <property type="molecule type" value="Genomic_RNA"/>
</dbReference>
<dbReference type="EMBL" id="CY009300">
    <property type="protein sequence ID" value="ABD61551.1"/>
    <property type="molecule type" value="Genomic_RNA"/>
</dbReference>
<dbReference type="SMR" id="P26139"/>
<dbReference type="GlyCosmos" id="P26139">
    <property type="glycosylation" value="8 sites, No reported glycans"/>
</dbReference>
<dbReference type="PRO" id="PR:P26139"/>
<dbReference type="Proteomes" id="UP000009193">
    <property type="component" value="Genome"/>
</dbReference>
<dbReference type="GO" id="GO:0020002">
    <property type="term" value="C:host cell plasma membrane"/>
    <property type="evidence" value="ECO:0007669"/>
    <property type="project" value="UniProtKB-SubCell"/>
</dbReference>
<dbReference type="GO" id="GO:0016020">
    <property type="term" value="C:membrane"/>
    <property type="evidence" value="ECO:0007669"/>
    <property type="project" value="UniProtKB-UniRule"/>
</dbReference>
<dbReference type="GO" id="GO:0019031">
    <property type="term" value="C:viral envelope"/>
    <property type="evidence" value="ECO:0007669"/>
    <property type="project" value="UniProtKB-UniRule"/>
</dbReference>
<dbReference type="GO" id="GO:0055036">
    <property type="term" value="C:virion membrane"/>
    <property type="evidence" value="ECO:0007669"/>
    <property type="project" value="UniProtKB-SubCell"/>
</dbReference>
<dbReference type="GO" id="GO:0046789">
    <property type="term" value="F:host cell surface receptor binding"/>
    <property type="evidence" value="ECO:0007669"/>
    <property type="project" value="UniProtKB-UniRule"/>
</dbReference>
<dbReference type="GO" id="GO:0075512">
    <property type="term" value="P:clathrin-dependent endocytosis of virus by host cell"/>
    <property type="evidence" value="ECO:0007669"/>
    <property type="project" value="UniProtKB-UniRule"/>
</dbReference>
<dbReference type="GO" id="GO:0039654">
    <property type="term" value="P:fusion of virus membrane with host endosome membrane"/>
    <property type="evidence" value="ECO:0007669"/>
    <property type="project" value="UniProtKB-UniRule"/>
</dbReference>
<dbReference type="GO" id="GO:0019064">
    <property type="term" value="P:fusion of virus membrane with host plasma membrane"/>
    <property type="evidence" value="ECO:0007669"/>
    <property type="project" value="InterPro"/>
</dbReference>
<dbReference type="GO" id="GO:0046761">
    <property type="term" value="P:viral budding from plasma membrane"/>
    <property type="evidence" value="ECO:0007669"/>
    <property type="project" value="UniProtKB-UniRule"/>
</dbReference>
<dbReference type="GO" id="GO:0019062">
    <property type="term" value="P:virion attachment to host cell"/>
    <property type="evidence" value="ECO:0007669"/>
    <property type="project" value="UniProtKB-KW"/>
</dbReference>
<dbReference type="FunFam" id="3.90.20.10:FF:000001">
    <property type="entry name" value="Hemagglutinin"/>
    <property type="match status" value="1"/>
</dbReference>
<dbReference type="FunFam" id="3.90.209.20:FF:000001">
    <property type="entry name" value="Hemagglutinin"/>
    <property type="match status" value="1"/>
</dbReference>
<dbReference type="Gene3D" id="3.90.20.10">
    <property type="match status" value="1"/>
</dbReference>
<dbReference type="Gene3D" id="3.90.209.20">
    <property type="match status" value="1"/>
</dbReference>
<dbReference type="HAMAP" id="MF_04072">
    <property type="entry name" value="INFV_HEMA"/>
    <property type="match status" value="1"/>
</dbReference>
<dbReference type="InterPro" id="IPR008980">
    <property type="entry name" value="Capsid_hemagglutn"/>
</dbReference>
<dbReference type="InterPro" id="IPR013828">
    <property type="entry name" value="Hemagglutn_HA1_a/b_dom_sf"/>
</dbReference>
<dbReference type="InterPro" id="IPR000149">
    <property type="entry name" value="Hemagglutn_influenz_A"/>
</dbReference>
<dbReference type="InterPro" id="IPR001364">
    <property type="entry name" value="Hemagglutn_influenz_A/B"/>
</dbReference>
<dbReference type="Pfam" id="PF00509">
    <property type="entry name" value="Hemagglutinin"/>
    <property type="match status" value="1"/>
</dbReference>
<dbReference type="PRINTS" id="PR00330">
    <property type="entry name" value="HEMAGGLUTN1"/>
</dbReference>
<dbReference type="PRINTS" id="PR00329">
    <property type="entry name" value="HEMAGGLUTN12"/>
</dbReference>
<dbReference type="SUPFAM" id="SSF58064">
    <property type="entry name" value="Influenza hemagglutinin (stalk)"/>
    <property type="match status" value="1"/>
</dbReference>
<dbReference type="SUPFAM" id="SSF49818">
    <property type="entry name" value="Viral protein domain"/>
    <property type="match status" value="1"/>
</dbReference>
<organism>
    <name type="scientific">Influenza A virus (strain A/Swine/Colorado/1/1977 H3N2)</name>
    <dbReference type="NCBI Taxonomy" id="385645"/>
    <lineage>
        <taxon>Viruses</taxon>
        <taxon>Riboviria</taxon>
        <taxon>Orthornavirae</taxon>
        <taxon>Negarnaviricota</taxon>
        <taxon>Polyploviricotina</taxon>
        <taxon>Insthoviricetes</taxon>
        <taxon>Articulavirales</taxon>
        <taxon>Orthomyxoviridae</taxon>
        <taxon>Alphainfluenzavirus</taxon>
        <taxon>Alphainfluenzavirus influenzae</taxon>
        <taxon>Influenza A virus</taxon>
    </lineage>
</organism>
<proteinExistence type="inferred from homology"/>
<reference key="1">
    <citation type="journal article" date="1992" name="J. Virol.">
        <title>Evolution of the H3 influenza virus hemagglutinin from human and nonhuman hosts.</title>
        <authorList>
            <person name="Bean W.J."/>
            <person name="Schell M."/>
            <person name="Katz J."/>
            <person name="Kawaoka Y."/>
            <person name="Naeve C."/>
            <person name="Gorman O."/>
            <person name="Webster R.G."/>
        </authorList>
    </citation>
    <scope>NUCLEOTIDE SEQUENCE [GENOMIC RNA]</scope>
</reference>
<reference key="2">
    <citation type="submission" date="2006-03" db="EMBL/GenBank/DDBJ databases">
        <title>The NIAID influenza genome sequencing project.</title>
        <authorList>
            <person name="Ghedin E."/>
            <person name="Spiro D."/>
            <person name="Miller N."/>
            <person name="Zaborsky J."/>
            <person name="Feldblyum T."/>
            <person name="Subbu V."/>
            <person name="Shumway M."/>
            <person name="Sparenborg J."/>
            <person name="Groveman L."/>
            <person name="Halpin R."/>
            <person name="Sitz J."/>
            <person name="Koo H."/>
            <person name="Salzberg S.L."/>
            <person name="Webster R.G."/>
            <person name="Hoffmann E."/>
            <person name="Krauss S."/>
            <person name="Naeve C."/>
            <person name="Bao Y."/>
            <person name="Bolotov P."/>
            <person name="Dernovoy D."/>
            <person name="Kiryutin B."/>
            <person name="Lipman D.J."/>
            <person name="Tatusova T."/>
        </authorList>
    </citation>
    <scope>NUCLEOTIDE SEQUENCE [GENOMIC RNA]</scope>
</reference>
<sequence>MKTIIALSYIFCLVFAQDLPGNDNSTATLCLGHHAVPNGTLVKTITNDQIEVTNATELVQSSSTGKICDNPHRILDGINCTLIDALLGDPHCDGFQNEKWDLFVERSKAFSNCYPYDVPDYASLRSLVASSGTLEFINEGFNWTGVTQNGGSSACKRGPDNGFFSRLNWLYKSGSTYPVQNVTMPNNDNSDKLYIWGVHHPSTDKEQTDLYVQASGKVTVSTKRSQQTVIPNVGSRPWVRGLSSRVSIYWTIVKPGDILVINSNGNLIAPRGYYKMRTGKSSIMRSDAPIGTCSSECITPNGSIPNDKPFQNVNKITYGACPKYVKQNTLKLATGMRNVPEKQTRGIFGAIAGFIENGWEGMIDGWYGFRHQNSEGTGQAADLKSTQAAIDQINGKLNRVIEKTNEKFHQIEKEFSEVEGRIQDLEKYVEDTKIDLWSYNAELLVALENQHTIDLTDSEMNKLFEKTRRQLRENAEDMGNGCFKIYHKCDNACIGSIRNGTYDHDVYRDEALNNRFQIKGVELKSGYKDWILWISFAISCFLLCVVLLGFIMWACQKGNIRCNICI</sequence>
<feature type="signal peptide" evidence="1">
    <location>
        <begin position="1"/>
        <end position="16"/>
    </location>
</feature>
<feature type="chain" id="PRO_0000440462" description="Hemagglutinin" evidence="1">
    <location>
        <begin position="17"/>
        <end position="566"/>
    </location>
</feature>
<feature type="chain" id="PRO_0000039073" description="Hemagglutinin HA1 chain">
    <location>
        <begin position="17"/>
        <end position="344"/>
    </location>
</feature>
<feature type="chain" id="PRO_0000039074" description="Hemagglutinin HA2 chain" evidence="1">
    <location>
        <begin position="346"/>
        <end position="566"/>
    </location>
</feature>
<feature type="topological domain" description="Extracellular" evidence="1">
    <location>
        <begin position="17"/>
        <end position="530"/>
    </location>
</feature>
<feature type="transmembrane region" description="Helical" evidence="1">
    <location>
        <begin position="531"/>
        <end position="551"/>
    </location>
</feature>
<feature type="topological domain" description="Cytoplasmic" evidence="1">
    <location>
        <begin position="552"/>
        <end position="566"/>
    </location>
</feature>
<feature type="site" description="Cleavage; by host" evidence="1">
    <location>
        <begin position="345"/>
        <end position="346"/>
    </location>
</feature>
<feature type="lipid moiety-binding region" description="S-palmitoyl cysteine; by host" evidence="1">
    <location>
        <position position="555"/>
    </location>
</feature>
<feature type="lipid moiety-binding region" description="S-palmitoyl cysteine; by host" evidence="1">
    <location>
        <position position="562"/>
    </location>
</feature>
<feature type="lipid moiety-binding region" description="S-palmitoyl cysteine; by host" evidence="1">
    <location>
        <position position="565"/>
    </location>
</feature>
<feature type="glycosylation site" description="N-linked (GlcNAc...) asparagine; by host" evidence="1">
    <location>
        <position position="24"/>
    </location>
</feature>
<feature type="glycosylation site" description="N-linked (GlcNAc...) asparagine; by host" evidence="1">
    <location>
        <position position="38"/>
    </location>
</feature>
<feature type="glycosylation site" description="N-linked (GlcNAc...) asparagine; by host" evidence="1">
    <location>
        <position position="54"/>
    </location>
</feature>
<feature type="glycosylation site" description="N-linked (GlcNAc...) asparagine; by host" evidence="1">
    <location>
        <position position="79"/>
    </location>
</feature>
<feature type="glycosylation site" description="N-linked (GlcNAc...) asparagine; by host" evidence="1">
    <location>
        <position position="142"/>
    </location>
</feature>
<feature type="glycosylation site" description="N-linked (GlcNAc...) asparagine; by host" evidence="1">
    <location>
        <position position="181"/>
    </location>
</feature>
<feature type="glycosylation site" description="N-linked (GlcNAc...) asparagine; by host" evidence="1">
    <location>
        <position position="301"/>
    </location>
</feature>
<feature type="glycosylation site" description="N-linked (GlcNAc...) asparagine; by host" evidence="1">
    <location>
        <position position="499"/>
    </location>
</feature>
<feature type="disulfide bond" description="Interchain (between HA1 and HA2 chains)" evidence="1">
    <location>
        <begin position="30"/>
        <end position="482"/>
    </location>
</feature>
<feature type="disulfide bond" evidence="1">
    <location>
        <begin position="68"/>
        <end position="293"/>
    </location>
</feature>
<feature type="disulfide bond" evidence="1">
    <location>
        <begin position="80"/>
        <end position="92"/>
    </location>
</feature>
<feature type="disulfide bond" evidence="1">
    <location>
        <begin position="113"/>
        <end position="155"/>
    </location>
</feature>
<feature type="disulfide bond" evidence="1">
    <location>
        <begin position="297"/>
        <end position="321"/>
    </location>
</feature>
<feature type="disulfide bond" evidence="1">
    <location>
        <begin position="489"/>
        <end position="493"/>
    </location>
</feature>
<feature type="sequence conflict" description="In Ref. 1; ABF60580." evidence="2" ref="1">
    <original>V</original>
    <variation>A</variation>
    <location>
        <position position="14"/>
    </location>
</feature>
<feature type="sequence conflict" description="In Ref. 1; ABF60580." evidence="2" ref="1">
    <original>S</original>
    <variation>I</variation>
    <location>
        <position position="225"/>
    </location>
</feature>
<feature type="sequence conflict" description="In Ref. 1; ABF60580." evidence="2" ref="1">
    <original>I</original>
    <variation>V</variation>
    <location>
        <position position="258"/>
    </location>
</feature>
<feature type="sequence conflict" description="In Ref. 1; ABF60580." evidence="2" ref="1">
    <original>L</original>
    <variation>V</variation>
    <location>
        <position position="443"/>
    </location>
</feature>
<protein>
    <recommendedName>
        <fullName evidence="1">Hemagglutinin</fullName>
    </recommendedName>
    <component>
        <recommendedName>
            <fullName evidence="1">Hemagglutinin HA1 chain</fullName>
        </recommendedName>
    </component>
    <component>
        <recommendedName>
            <fullName evidence="1">Hemagglutinin HA2 chain</fullName>
        </recommendedName>
    </component>
</protein>
<accession>P26139</accession>
<accession>Q1G0L9</accession>
<accession>Q288Z6</accession>
<keyword id="KW-1167">Clathrin- and caveolin-independent endocytosis of virus by host</keyword>
<keyword id="KW-1165">Clathrin-mediated endocytosis of virus by host</keyword>
<keyword id="KW-1015">Disulfide bond</keyword>
<keyword id="KW-1170">Fusion of virus membrane with host endosomal membrane</keyword>
<keyword id="KW-1168">Fusion of virus membrane with host membrane</keyword>
<keyword id="KW-0325">Glycoprotein</keyword>
<keyword id="KW-0348">Hemagglutinin</keyword>
<keyword id="KW-1032">Host cell membrane</keyword>
<keyword id="KW-1043">Host membrane</keyword>
<keyword id="KW-0945">Host-virus interaction</keyword>
<keyword id="KW-0449">Lipoprotein</keyword>
<keyword id="KW-0472">Membrane</keyword>
<keyword id="KW-0564">Palmitate</keyword>
<keyword id="KW-0732">Signal</keyword>
<keyword id="KW-0812">Transmembrane</keyword>
<keyword id="KW-1133">Transmembrane helix</keyword>
<keyword id="KW-1161">Viral attachment to host cell</keyword>
<keyword id="KW-0261">Viral envelope protein</keyword>
<keyword id="KW-1162">Viral penetration into host cytoplasm</keyword>
<keyword id="KW-0946">Virion</keyword>
<keyword id="KW-1164">Virus endocytosis by host</keyword>
<keyword id="KW-1160">Virus entry into host cell</keyword>
<comment type="function">
    <text>Binds to sialic acid-containing receptors on the cell surface, bringing about the attachment of the virus particle to the cell. This attachment induces virion internalization of about two third of the virus particles through clathrin-dependent endocytosis and about one third through a clathrin- and caveolin-independent pathway. Plays a major role in the determination of host range restriction and virulence. Class I viral fusion protein. Responsible for penetration of the virus into the cell cytoplasm by mediating the fusion of the membrane of the endocytosed virus particle with the endosomal membrane. Low pH in endosomes induces an irreversible conformational change in HA2, releasing the fusion hydrophobic peptide. Several trimers are required to form a competent fusion pore.</text>
</comment>
<comment type="function">
    <text evidence="1">Binds to sialic acid-containing receptors on the cell surface, bringing about the attachment of the virus particle to the cell. This attachment induces virion internalization either through clathrin-dependent endocytosis or through clathrin- and caveolin-independent pathway. Plays a major role in the determination of host range restriction and virulence. Class I viral fusion protein. Responsible for penetration of the virus into the cell cytoplasm by mediating the fusion of the membrane of the endocytosed virus particle with the endosomal membrane. Low pH in endosomes induces an irreversible conformational change in HA2, releasing the fusion hydrophobic peptide. Several trimers are required to form a competent fusion pore.</text>
</comment>
<comment type="subunit">
    <text evidence="1">Homotrimer of disulfide-linked HA1-HA2.</text>
</comment>
<comment type="subcellular location">
    <subcellularLocation>
        <location evidence="1">Virion membrane</location>
        <topology evidence="1">Single-pass type I membrane protein</topology>
    </subcellularLocation>
    <subcellularLocation>
        <location evidence="1">Host apical cell membrane</location>
        <topology evidence="1">Single-pass type I membrane protein</topology>
    </subcellularLocation>
    <text evidence="1">Targeted to the apical plasma membrane in epithelial polarized cells through a signal present in the transmembrane domain. Associated with glycosphingolipid- and cholesterol-enriched detergent-resistant lipid rafts.</text>
</comment>
<comment type="PTM">
    <text evidence="1">Palmitoylated.</text>
</comment>
<comment type="PTM">
    <text evidence="1">In natural infection, inactive HA is matured into HA1 and HA2 outside the cell by one or more trypsin-like, arginine-specific endoprotease secreted by the bronchial epithelial cells. One identified protease that may be involved in this process is secreted in lungs by club cells.</text>
</comment>
<comment type="miscellaneous">
    <text>Major glycoprotein, comprises over 80% of the envelope proteins present in virus particle.</text>
</comment>
<comment type="miscellaneous">
    <text>The extent of infection into host organism is determined by HA. Influenza viruses bud from the apical surface of polarized epithelial cells (e.g. bronchial epithelial cells) into lumen of lungs and are therefore usually pneumotropic. The reason is that HA is cleaved by tryptase clara which is restricted to lungs. However, HAs of H5 and H7 pantropic avian viruses subtypes can be cleaved by furin and subtilisin-type enzymes, allowing the virus to grow in other organs than lungs.</text>
</comment>
<comment type="miscellaneous">
    <text evidence="2">The influenza A genome consist of 8 RNA segments. Genetic variation of hemagglutinin and/or neuraminidase genes results in the emergence of new influenza strains. The mechanism of variation can be the result of point mutations or the result of genetic reassortment between segments of two different strains.</text>
</comment>
<comment type="similarity">
    <text evidence="1">Belongs to the influenza viruses hemagglutinin family.</text>
</comment>
<evidence type="ECO:0000255" key="1">
    <source>
        <dbReference type="HAMAP-Rule" id="MF_04072"/>
    </source>
</evidence>
<evidence type="ECO:0000305" key="2"/>
<organismHost>
    <name type="scientific">Aves</name>
    <dbReference type="NCBI Taxonomy" id="8782"/>
</organismHost>
<organismHost>
    <name type="scientific">Cetacea</name>
    <name type="common">whales</name>
    <dbReference type="NCBI Taxonomy" id="9721"/>
</organismHost>
<organismHost>
    <name type="scientific">Homo sapiens</name>
    <name type="common">Human</name>
    <dbReference type="NCBI Taxonomy" id="9606"/>
</organismHost>
<organismHost>
    <name type="scientific">Phocidae</name>
    <name type="common">true seals</name>
    <dbReference type="NCBI Taxonomy" id="9709"/>
</organismHost>
<organismHost>
    <name type="scientific">Sus scrofa</name>
    <name type="common">Pig</name>
    <dbReference type="NCBI Taxonomy" id="9823"/>
</organismHost>
<gene>
    <name evidence="1" type="primary">HA</name>
</gene>
<name>HEMA_I77A4</name>